<keyword id="KW-0648">Protein biosynthesis</keyword>
<keyword id="KW-0808">Transferase</keyword>
<feature type="chain" id="PRO_1000058401" description="Methionyl-tRNA formyltransferase">
    <location>
        <begin position="1"/>
        <end position="315"/>
    </location>
</feature>
<feature type="binding site" evidence="1">
    <location>
        <begin position="113"/>
        <end position="116"/>
    </location>
    <ligand>
        <name>(6S)-5,6,7,8-tetrahydrofolate</name>
        <dbReference type="ChEBI" id="CHEBI:57453"/>
    </ligand>
</feature>
<gene>
    <name evidence="1" type="primary">fmt</name>
    <name type="ordered locus">EcHS_A3481</name>
</gene>
<accession>A8A592</accession>
<evidence type="ECO:0000255" key="1">
    <source>
        <dbReference type="HAMAP-Rule" id="MF_00182"/>
    </source>
</evidence>
<sequence length="315" mass="34168">MSESLRIIFAGTPDFAARHLDALLSSGHNVVGVFTQPDRPAGRGKKLMPSPVKVLAEEKGLPVFQPVSLRPQENQQLVAELQADVMVVVAYGLILPKAVLEMPRLGCINVHGSLLPRWRGAAPIQRSLWAGDAETGVTIMQMDVGLDTGDMLYKLSCPITAEDTSGTLYDKLAELGPQGLITTLKQLADGTAKPEVQDETLVTYAEKLSKEEARIDWSLSAAQLERCIRAFNPWPMSWLEIEGQPVKVWKASVIDTATNAAPGTILEANKQGIQVATGDGILNLLSLQPAGKKAMSAQDLLNSRREWFVPGNRLV</sequence>
<reference key="1">
    <citation type="journal article" date="2008" name="J. Bacteriol.">
        <title>The pangenome structure of Escherichia coli: comparative genomic analysis of E. coli commensal and pathogenic isolates.</title>
        <authorList>
            <person name="Rasko D.A."/>
            <person name="Rosovitz M.J."/>
            <person name="Myers G.S.A."/>
            <person name="Mongodin E.F."/>
            <person name="Fricke W.F."/>
            <person name="Gajer P."/>
            <person name="Crabtree J."/>
            <person name="Sebaihia M."/>
            <person name="Thomson N.R."/>
            <person name="Chaudhuri R."/>
            <person name="Henderson I.R."/>
            <person name="Sperandio V."/>
            <person name="Ravel J."/>
        </authorList>
    </citation>
    <scope>NUCLEOTIDE SEQUENCE [LARGE SCALE GENOMIC DNA]</scope>
    <source>
        <strain>HS</strain>
    </source>
</reference>
<organism>
    <name type="scientific">Escherichia coli O9:H4 (strain HS)</name>
    <dbReference type="NCBI Taxonomy" id="331112"/>
    <lineage>
        <taxon>Bacteria</taxon>
        <taxon>Pseudomonadati</taxon>
        <taxon>Pseudomonadota</taxon>
        <taxon>Gammaproteobacteria</taxon>
        <taxon>Enterobacterales</taxon>
        <taxon>Enterobacteriaceae</taxon>
        <taxon>Escherichia</taxon>
    </lineage>
</organism>
<comment type="function">
    <text evidence="1">Attaches a formyl group to the free amino group of methionyl-tRNA(fMet). The formyl group appears to play a dual role in the initiator identity of N-formylmethionyl-tRNA by promoting its recognition by IF2 and preventing the misappropriation of this tRNA by the elongation apparatus.</text>
</comment>
<comment type="catalytic activity">
    <reaction evidence="1">
        <text>L-methionyl-tRNA(fMet) + (6R)-10-formyltetrahydrofolate = N-formyl-L-methionyl-tRNA(fMet) + (6S)-5,6,7,8-tetrahydrofolate + H(+)</text>
        <dbReference type="Rhea" id="RHEA:24380"/>
        <dbReference type="Rhea" id="RHEA-COMP:9952"/>
        <dbReference type="Rhea" id="RHEA-COMP:9953"/>
        <dbReference type="ChEBI" id="CHEBI:15378"/>
        <dbReference type="ChEBI" id="CHEBI:57453"/>
        <dbReference type="ChEBI" id="CHEBI:78530"/>
        <dbReference type="ChEBI" id="CHEBI:78844"/>
        <dbReference type="ChEBI" id="CHEBI:195366"/>
        <dbReference type="EC" id="2.1.2.9"/>
    </reaction>
</comment>
<comment type="similarity">
    <text evidence="1">Belongs to the Fmt family.</text>
</comment>
<proteinExistence type="inferred from homology"/>
<dbReference type="EC" id="2.1.2.9" evidence="1"/>
<dbReference type="EMBL" id="CP000802">
    <property type="protein sequence ID" value="ABV07696.1"/>
    <property type="molecule type" value="Genomic_DNA"/>
</dbReference>
<dbReference type="RefSeq" id="WP_000004473.1">
    <property type="nucleotide sequence ID" value="NC_009800.1"/>
</dbReference>
<dbReference type="SMR" id="A8A592"/>
<dbReference type="KEGG" id="ecx:EcHS_A3481"/>
<dbReference type="HOGENOM" id="CLU_033347_1_2_6"/>
<dbReference type="GO" id="GO:0005829">
    <property type="term" value="C:cytosol"/>
    <property type="evidence" value="ECO:0007669"/>
    <property type="project" value="TreeGrafter"/>
</dbReference>
<dbReference type="GO" id="GO:0004479">
    <property type="term" value="F:methionyl-tRNA formyltransferase activity"/>
    <property type="evidence" value="ECO:0007669"/>
    <property type="project" value="UniProtKB-UniRule"/>
</dbReference>
<dbReference type="CDD" id="cd08646">
    <property type="entry name" value="FMT_core_Met-tRNA-FMT_N"/>
    <property type="match status" value="1"/>
</dbReference>
<dbReference type="CDD" id="cd08704">
    <property type="entry name" value="Met_tRNA_FMT_C"/>
    <property type="match status" value="1"/>
</dbReference>
<dbReference type="FunFam" id="3.10.25.10:FF:000001">
    <property type="entry name" value="Methionyl-tRNA formyltransferase"/>
    <property type="match status" value="1"/>
</dbReference>
<dbReference type="FunFam" id="3.40.50.12230:FF:000001">
    <property type="entry name" value="Methionyl-tRNA formyltransferase"/>
    <property type="match status" value="1"/>
</dbReference>
<dbReference type="FunFam" id="3.40.50.170:FF:000003">
    <property type="entry name" value="Methionyl-tRNA formyltransferase"/>
    <property type="match status" value="1"/>
</dbReference>
<dbReference type="Gene3D" id="3.10.25.10">
    <property type="entry name" value="Formyl transferase, C-terminal domain"/>
    <property type="match status" value="1"/>
</dbReference>
<dbReference type="Gene3D" id="3.40.50.170">
    <property type="entry name" value="Formyl transferase, N-terminal domain"/>
    <property type="match status" value="1"/>
</dbReference>
<dbReference type="HAMAP" id="MF_00182">
    <property type="entry name" value="Formyl_trans"/>
    <property type="match status" value="1"/>
</dbReference>
<dbReference type="InterPro" id="IPR005794">
    <property type="entry name" value="Fmt"/>
</dbReference>
<dbReference type="InterPro" id="IPR005793">
    <property type="entry name" value="Formyl_trans_C"/>
</dbReference>
<dbReference type="InterPro" id="IPR037022">
    <property type="entry name" value="Formyl_trans_C_sf"/>
</dbReference>
<dbReference type="InterPro" id="IPR002376">
    <property type="entry name" value="Formyl_transf_N"/>
</dbReference>
<dbReference type="InterPro" id="IPR036477">
    <property type="entry name" value="Formyl_transf_N_sf"/>
</dbReference>
<dbReference type="InterPro" id="IPR011034">
    <property type="entry name" value="Formyl_transferase-like_C_sf"/>
</dbReference>
<dbReference type="InterPro" id="IPR001555">
    <property type="entry name" value="GART_AS"/>
</dbReference>
<dbReference type="InterPro" id="IPR044135">
    <property type="entry name" value="Met-tRNA-FMT_C"/>
</dbReference>
<dbReference type="InterPro" id="IPR041711">
    <property type="entry name" value="Met-tRNA-FMT_N"/>
</dbReference>
<dbReference type="NCBIfam" id="TIGR00460">
    <property type="entry name" value="fmt"/>
    <property type="match status" value="1"/>
</dbReference>
<dbReference type="PANTHER" id="PTHR11138">
    <property type="entry name" value="METHIONYL-TRNA FORMYLTRANSFERASE"/>
    <property type="match status" value="1"/>
</dbReference>
<dbReference type="PANTHER" id="PTHR11138:SF5">
    <property type="entry name" value="METHIONYL-TRNA FORMYLTRANSFERASE, MITOCHONDRIAL"/>
    <property type="match status" value="1"/>
</dbReference>
<dbReference type="Pfam" id="PF02911">
    <property type="entry name" value="Formyl_trans_C"/>
    <property type="match status" value="1"/>
</dbReference>
<dbReference type="Pfam" id="PF00551">
    <property type="entry name" value="Formyl_trans_N"/>
    <property type="match status" value="1"/>
</dbReference>
<dbReference type="SUPFAM" id="SSF50486">
    <property type="entry name" value="FMT C-terminal domain-like"/>
    <property type="match status" value="1"/>
</dbReference>
<dbReference type="SUPFAM" id="SSF53328">
    <property type="entry name" value="Formyltransferase"/>
    <property type="match status" value="1"/>
</dbReference>
<dbReference type="PROSITE" id="PS00373">
    <property type="entry name" value="GART"/>
    <property type="match status" value="1"/>
</dbReference>
<protein>
    <recommendedName>
        <fullName evidence="1">Methionyl-tRNA formyltransferase</fullName>
        <ecNumber evidence="1">2.1.2.9</ecNumber>
    </recommendedName>
</protein>
<name>FMT_ECOHS</name>